<evidence type="ECO:0000255" key="1">
    <source>
        <dbReference type="HAMAP-Rule" id="MF_01419"/>
    </source>
</evidence>
<feature type="chain" id="PRO_0000146719" description="Phosphoglycolate phosphatase">
    <location>
        <begin position="1"/>
        <end position="226"/>
    </location>
</feature>
<feature type="active site" description="Nucleophile" evidence="1">
    <location>
        <position position="9"/>
    </location>
</feature>
<feature type="binding site" evidence="1">
    <location>
        <position position="9"/>
    </location>
    <ligand>
        <name>Mg(2+)</name>
        <dbReference type="ChEBI" id="CHEBI:18420"/>
    </ligand>
</feature>
<feature type="binding site" evidence="1">
    <location>
        <position position="11"/>
    </location>
    <ligand>
        <name>Mg(2+)</name>
        <dbReference type="ChEBI" id="CHEBI:18420"/>
    </ligand>
</feature>
<feature type="binding site" evidence="1">
    <location>
        <position position="150"/>
    </location>
    <ligand>
        <name>substrate</name>
    </ligand>
</feature>
<feature type="binding site" evidence="1">
    <location>
        <position position="173"/>
    </location>
    <ligand>
        <name>Mg(2+)</name>
        <dbReference type="ChEBI" id="CHEBI:18420"/>
    </ligand>
</feature>
<feature type="binding site" evidence="1">
    <location>
        <position position="177"/>
    </location>
    <ligand>
        <name>Mg(2+)</name>
        <dbReference type="ChEBI" id="CHEBI:18420"/>
    </ligand>
</feature>
<protein>
    <recommendedName>
        <fullName evidence="1">Phosphoglycolate phosphatase</fullName>
        <shortName evidence="1">PGP</shortName>
        <shortName evidence="1">PGPase</shortName>
        <ecNumber evidence="1">3.1.3.18</ecNumber>
    </recommendedName>
</protein>
<reference key="1">
    <citation type="journal article" date="2002" name="J. Mol. Microbiol. Biotechnol.">
        <title>The genome of Methanosarcina mazei: evidence for lateral gene transfer between Bacteria and Archaea.</title>
        <authorList>
            <person name="Deppenmeier U."/>
            <person name="Johann A."/>
            <person name="Hartsch T."/>
            <person name="Merkl R."/>
            <person name="Schmitz R.A."/>
            <person name="Martinez-Arias R."/>
            <person name="Henne A."/>
            <person name="Wiezer A."/>
            <person name="Baeumer S."/>
            <person name="Jacobi C."/>
            <person name="Brueggemann H."/>
            <person name="Lienard T."/>
            <person name="Christmann A."/>
            <person name="Boemecke M."/>
            <person name="Steckel S."/>
            <person name="Bhattacharyya A."/>
            <person name="Lykidis A."/>
            <person name="Overbeek R."/>
            <person name="Klenk H.-P."/>
            <person name="Gunsalus R.P."/>
            <person name="Fritz H.-J."/>
            <person name="Gottschalk G."/>
        </authorList>
    </citation>
    <scope>NUCLEOTIDE SEQUENCE [LARGE SCALE GENOMIC DNA]</scope>
    <source>
        <strain>ATCC BAA-159 / DSM 3647 / Goe1 / Go1 / JCM 11833 / OCM 88</strain>
    </source>
</reference>
<sequence>MKFKALVIDIDGTITCKNRELHLGAVKKMRTLNVPVVLATGNILCYARTASRLIGLGGAVIAENGGAVTVRYDVNGIFEGSLEECEKAFSFLSQHFKLTKLDPTYRKTEIALRRDFDLEEARSLLETQPFDIELVDTKYAIHIKSIKINKGIGLQKLAGMMGFEAEDFVAIGDSANDAEMFEAAGFGIAVANGDERVKEVANYVTEASFGDGAVEAIEFLESNGWI</sequence>
<keyword id="KW-0119">Carbohydrate metabolism</keyword>
<keyword id="KW-0378">Hydrolase</keyword>
<keyword id="KW-0460">Magnesium</keyword>
<keyword id="KW-0479">Metal-binding</keyword>
<dbReference type="EC" id="3.1.3.18" evidence="1"/>
<dbReference type="EMBL" id="AE008384">
    <property type="protein sequence ID" value="AAM30152.1"/>
    <property type="molecule type" value="Genomic_DNA"/>
</dbReference>
<dbReference type="RefSeq" id="WP_011032409.1">
    <property type="nucleotide sequence ID" value="NC_003901.1"/>
</dbReference>
<dbReference type="SMR" id="Q8PZN6"/>
<dbReference type="KEGG" id="mma:MM_0456"/>
<dbReference type="PATRIC" id="fig|192952.21.peg.551"/>
<dbReference type="eggNOG" id="arCOG01213">
    <property type="taxonomic scope" value="Archaea"/>
</dbReference>
<dbReference type="HOGENOM" id="CLU_044146_2_0_2"/>
<dbReference type="Proteomes" id="UP000000595">
    <property type="component" value="Chromosome"/>
</dbReference>
<dbReference type="GO" id="GO:0005829">
    <property type="term" value="C:cytosol"/>
    <property type="evidence" value="ECO:0007669"/>
    <property type="project" value="TreeGrafter"/>
</dbReference>
<dbReference type="GO" id="GO:0000287">
    <property type="term" value="F:magnesium ion binding"/>
    <property type="evidence" value="ECO:0007669"/>
    <property type="project" value="InterPro"/>
</dbReference>
<dbReference type="GO" id="GO:0008967">
    <property type="term" value="F:phosphoglycolate phosphatase activity"/>
    <property type="evidence" value="ECO:0007669"/>
    <property type="project" value="UniProtKB-UniRule"/>
</dbReference>
<dbReference type="CDD" id="cd07514">
    <property type="entry name" value="HAD_Pase"/>
    <property type="match status" value="1"/>
</dbReference>
<dbReference type="Gene3D" id="3.90.1070.10">
    <property type="match status" value="1"/>
</dbReference>
<dbReference type="Gene3D" id="3.40.50.1000">
    <property type="entry name" value="HAD superfamily/HAD-like"/>
    <property type="match status" value="1"/>
</dbReference>
<dbReference type="HAMAP" id="MF_01419">
    <property type="entry name" value="GPH_hydrolase_arch"/>
    <property type="match status" value="1"/>
</dbReference>
<dbReference type="InterPro" id="IPR036412">
    <property type="entry name" value="HAD-like_sf"/>
</dbReference>
<dbReference type="InterPro" id="IPR006379">
    <property type="entry name" value="HAD-SF_hydro_IIB"/>
</dbReference>
<dbReference type="InterPro" id="IPR023214">
    <property type="entry name" value="HAD_sf"/>
</dbReference>
<dbReference type="InterPro" id="IPR006382">
    <property type="entry name" value="PGPase"/>
</dbReference>
<dbReference type="NCBIfam" id="TIGR01484">
    <property type="entry name" value="HAD-SF-IIB"/>
    <property type="match status" value="1"/>
</dbReference>
<dbReference type="NCBIfam" id="TIGR01487">
    <property type="entry name" value="Pglycolate_arch"/>
    <property type="match status" value="1"/>
</dbReference>
<dbReference type="NCBIfam" id="NF002245">
    <property type="entry name" value="PRK01158.1"/>
    <property type="match status" value="1"/>
</dbReference>
<dbReference type="NCBIfam" id="TIGR01482">
    <property type="entry name" value="SPP-subfamily"/>
    <property type="match status" value="1"/>
</dbReference>
<dbReference type="PANTHER" id="PTHR10000:SF8">
    <property type="entry name" value="HAD SUPERFAMILY HYDROLASE-LIKE, TYPE 3"/>
    <property type="match status" value="1"/>
</dbReference>
<dbReference type="PANTHER" id="PTHR10000">
    <property type="entry name" value="PHOSPHOSERINE PHOSPHATASE"/>
    <property type="match status" value="1"/>
</dbReference>
<dbReference type="Pfam" id="PF08282">
    <property type="entry name" value="Hydrolase_3"/>
    <property type="match status" value="2"/>
</dbReference>
<dbReference type="SUPFAM" id="SSF56784">
    <property type="entry name" value="HAD-like"/>
    <property type="match status" value="1"/>
</dbReference>
<comment type="function">
    <text evidence="1">Catalyzes the dephosphorylation of 2-phosphoglycolate.</text>
</comment>
<comment type="catalytic activity">
    <reaction evidence="1">
        <text>2-phosphoglycolate + H2O = glycolate + phosphate</text>
        <dbReference type="Rhea" id="RHEA:14369"/>
        <dbReference type="ChEBI" id="CHEBI:15377"/>
        <dbReference type="ChEBI" id="CHEBI:29805"/>
        <dbReference type="ChEBI" id="CHEBI:43474"/>
        <dbReference type="ChEBI" id="CHEBI:58033"/>
        <dbReference type="EC" id="3.1.3.18"/>
    </reaction>
</comment>
<comment type="cofactor">
    <cofactor evidence="1">
        <name>Mg(2+)</name>
        <dbReference type="ChEBI" id="CHEBI:18420"/>
    </cofactor>
</comment>
<comment type="similarity">
    <text evidence="1">Belongs to the archaeal SPP-like hydrolase family.</text>
</comment>
<proteinExistence type="inferred from homology"/>
<gene>
    <name type="ordered locus">MM_0456</name>
</gene>
<name>PGP_METMA</name>
<organism>
    <name type="scientific">Methanosarcina mazei (strain ATCC BAA-159 / DSM 3647 / Goe1 / Go1 / JCM 11833 / OCM 88)</name>
    <name type="common">Methanosarcina frisia</name>
    <dbReference type="NCBI Taxonomy" id="192952"/>
    <lineage>
        <taxon>Archaea</taxon>
        <taxon>Methanobacteriati</taxon>
        <taxon>Methanobacteriota</taxon>
        <taxon>Stenosarchaea group</taxon>
        <taxon>Methanomicrobia</taxon>
        <taxon>Methanosarcinales</taxon>
        <taxon>Methanosarcinaceae</taxon>
        <taxon>Methanosarcina</taxon>
    </lineage>
</organism>
<accession>Q8PZN6</accession>